<reference evidence="14" key="1">
    <citation type="journal article" date="2004" name="Protein Expr. Purif.">
        <title>Determination of the complete cDNA sequence, construction of expression systems, and elucidation of fibrinolytic activity for Tapes japonica lysozyme.</title>
        <authorList>
            <person name="Takeshita K."/>
            <person name="Hashimoto Y."/>
            <person name="Thujihata Y."/>
            <person name="So T."/>
            <person name="Ueda T."/>
            <person name="Iomoto T."/>
        </authorList>
    </citation>
    <scope>NUCLEOTIDE SEQUENCE [MRNA]</scope>
    <scope>FUNCTION</scope>
    <scope>CATALYTIC ACTIVITY</scope>
</reference>
<reference evidence="9" key="2">
    <citation type="journal article" date="1999" name="Eur. J. Biochem.">
        <title>Amino acid sequences of lysozymes newly purified from invertebrates imply wide distribution of a novel class in the lysozyme family.</title>
        <authorList>
            <person name="Ito Y."/>
            <person name="Yoshikawa A."/>
            <person name="Hotani T."/>
            <person name="Fukuda S."/>
            <person name="Sugimura K."/>
            <person name="Imoto T."/>
        </authorList>
    </citation>
    <scope>PROTEIN SEQUENCE OF 12-134</scope>
    <scope>FUNCTION</scope>
    <scope>CATALYTIC ACTIVITY</scope>
    <scope>BIOPHYSICOCHEMICAL PROPERTIES</scope>
</reference>
<reference evidence="13" key="3">
    <citation type="submission" date="2001-02" db="EMBL/GenBank/DDBJ databases">
        <title>Tapes japonica lysozyme.</title>
        <authorList>
            <person name="Takeshita K."/>
            <person name="Hashimoto Y."/>
            <person name="Imoto T."/>
        </authorList>
    </citation>
    <scope>NUCLEOTIDE SEQUENCE [MRNA] OF 12-134</scope>
</reference>
<reference evidence="9" key="4">
    <citation type="journal article" date="2003" name="Cell. Mol. Life Sci.">
        <title>A small chimerically bifunctional monomeric protein: Tapes japonica lysozyme.</title>
        <authorList>
            <person name="Takeshita K."/>
            <person name="Hashimoto Y."/>
            <person name="Ueda T."/>
            <person name="Imoto T."/>
        </authorList>
    </citation>
    <scope>FUNCTION</scope>
    <scope>CATALYTIC ACTIVITY</scope>
    <scope>MASS SPECTROMETRY</scope>
</reference>
<reference evidence="15" key="5">
    <citation type="journal article" date="2007" name="J. Biol. Chem.">
        <title>Crystal structure of Tapes japonica Lysozyme with substrate analogue: structural basis of the catalytic mechanism and manifestation of its chitinase activity accompanied by quaternary structural change.</title>
        <authorList>
            <person name="Goto T."/>
            <person name="Abe Y."/>
            <person name="Kakuta Y."/>
            <person name="Takeshita K."/>
            <person name="Imoto T."/>
            <person name="Ueda T."/>
        </authorList>
    </citation>
    <scope>X-RAY CRYSTALLOGRAPHY (1.60 ANGSTROMS) OF 12-134 IN COMPLEX WITH N-ACETYLGLUCOSAMINE TRISACCHARIDE</scope>
    <scope>FUNCTION</scope>
    <scope>CATALYTIC ACTIVITY</scope>
    <scope>ACTIVITY REGULATION</scope>
    <scope>SUBUNIT</scope>
    <scope>ACTIVE SITE</scope>
    <scope>DISULFIDE BONDS</scope>
    <scope>MUTAGENESIS OF GLU-29 AND ASP-41</scope>
</reference>
<sequence length="136" mass="15198">METVSVEEGLDFAPGMVSQKCLLCMCKLESGGCKPIGCRMDVGSLSCGYFQIKQPYWIDCGKPGKDWKSCSNDINCSSKCVQQYMKRYATHYRCPLNCEGFAREHNGGPNGCHSSRTLKYWELLQKIPGCKGVKFS</sequence>
<accession>Q8IU26</accession>
<accession>Q9BLE0</accession>
<comment type="function">
    <text evidence="4 5 6 7">Bacteriolytic activity against Gram-positive bacterium M.luteus and thereby probably protects against bacterial infection (PubMed:14523554, PubMed:15249048, PubMed:9914527). Also has chitinase activity (PubMed:14523554, PubMed:15249048, PubMed:17631496, PubMed:9914527). May act as an ispopeptidase, cleaving isopeptide bonds between the side chains of Lys and Gln residues in proteins or in the cross-linking peptide of peptidoglycan in bacterial cell walls (PubMed:14523554, PubMed:15249048).</text>
</comment>
<comment type="catalytic activity">
    <reaction evidence="4 5 6 7">
        <text>Hydrolysis of (1-&gt;4)-beta-linkages between N-acetylmuramic acid and N-acetyl-D-glucosamine residues in a peptidoglycan and between N-acetyl-D-glucosamine residues in chitodextrins.</text>
        <dbReference type="EC" id="3.2.1.17"/>
    </reaction>
</comment>
<comment type="activity regulation">
    <text evidence="6">Chitinase activity is activated by high salt concentrations which cause the release of the monomer from the autoinhibited homodimer.</text>
</comment>
<comment type="biophysicochemical properties">
    <kinetics>
        <KM evidence="7">34 uM for p-nitrophenyl beta 1,4-linked pentamer of N-acetyl-D-glucosamine ((GlcNAc)5-PNP) at pH 5 and 40 degrees Celsius</KM>
    </kinetics>
    <phDependence>
        <text evidence="7">Optimum pH is 4-5 at 40 degrees Celsius for chitinase activity.</text>
    </phDependence>
    <temperatureDependence>
        <text evidence="7">Optimum temperature is 76 degrees Celsius.</text>
    </temperatureDependence>
</comment>
<comment type="subunit">
    <text evidence="6">Homodimer in its autoinhibited state. Active as monomer.</text>
</comment>
<comment type="subcellular location">
    <subcellularLocation>
        <location evidence="1">Secreted</location>
    </subcellularLocation>
</comment>
<comment type="mass spectrometry" mass="13806.0" method="MALDI" evidence="4"/>
<comment type="similarity">
    <text evidence="3">Belongs to the glycosyl hydrolase 22 family. Type-I lysozyme subfamily.</text>
</comment>
<keyword id="KW-0002">3D-structure</keyword>
<keyword id="KW-0044">Antibiotic</keyword>
<keyword id="KW-0929">Antimicrobial</keyword>
<keyword id="KW-0081">Bacteriolytic enzyme</keyword>
<keyword id="KW-0903">Direct protein sequencing</keyword>
<keyword id="KW-1015">Disulfide bond</keyword>
<keyword id="KW-0325">Glycoprotein</keyword>
<keyword id="KW-0326">Glycosidase</keyword>
<keyword id="KW-0378">Hydrolase</keyword>
<keyword id="KW-0964">Secreted</keyword>
<keyword id="KW-0732">Signal</keyword>
<name>LYS_RUDPH</name>
<dbReference type="EC" id="3.2.1.17" evidence="4 5 6 7"/>
<dbReference type="EMBL" id="AB091383">
    <property type="protein sequence ID" value="BAC15553.1"/>
    <property type="molecule type" value="mRNA"/>
</dbReference>
<dbReference type="EMBL" id="AB055701">
    <property type="protein sequence ID" value="BAB33389.1"/>
    <property type="molecule type" value="mRNA"/>
</dbReference>
<dbReference type="PDB" id="2DQA">
    <property type="method" value="X-ray"/>
    <property type="resolution" value="1.60 A"/>
    <property type="chains" value="A/B=12-134"/>
</dbReference>
<dbReference type="PDBsum" id="2DQA"/>
<dbReference type="SMR" id="Q8IU26"/>
<dbReference type="CAZy" id="GH22">
    <property type="family name" value="Glycoside Hydrolase Family 22"/>
</dbReference>
<dbReference type="MEROPS" id="S81.001"/>
<dbReference type="EvolutionaryTrace" id="Q8IU26"/>
<dbReference type="GO" id="GO:0005576">
    <property type="term" value="C:extracellular region"/>
    <property type="evidence" value="ECO:0007669"/>
    <property type="project" value="UniProtKB-SubCell"/>
</dbReference>
<dbReference type="GO" id="GO:0004568">
    <property type="term" value="F:chitinase activity"/>
    <property type="evidence" value="ECO:0000314"/>
    <property type="project" value="UniProtKB"/>
</dbReference>
<dbReference type="GO" id="GO:0061929">
    <property type="term" value="F:gamma-glutamylaminecyclotransferase activity"/>
    <property type="evidence" value="ECO:0000314"/>
    <property type="project" value="UniProtKB"/>
</dbReference>
<dbReference type="GO" id="GO:0003796">
    <property type="term" value="F:lysozyme activity"/>
    <property type="evidence" value="ECO:0000314"/>
    <property type="project" value="UniProtKB"/>
</dbReference>
<dbReference type="GO" id="GO:0008233">
    <property type="term" value="F:peptidase activity"/>
    <property type="evidence" value="ECO:0000314"/>
    <property type="project" value="UniProtKB"/>
</dbReference>
<dbReference type="GO" id="GO:0042803">
    <property type="term" value="F:protein homodimerization activity"/>
    <property type="evidence" value="ECO:0000314"/>
    <property type="project" value="UniProtKB"/>
</dbReference>
<dbReference type="GO" id="GO:0042742">
    <property type="term" value="P:defense response to bacterium"/>
    <property type="evidence" value="ECO:0007669"/>
    <property type="project" value="UniProtKB-KW"/>
</dbReference>
<dbReference type="GO" id="GO:0031640">
    <property type="term" value="P:killing of cells of another organism"/>
    <property type="evidence" value="ECO:0007669"/>
    <property type="project" value="UniProtKB-KW"/>
</dbReference>
<dbReference type="CDD" id="cd16890">
    <property type="entry name" value="lyz_i"/>
    <property type="match status" value="1"/>
</dbReference>
<dbReference type="FunFam" id="1.10.530.10:FF:000023">
    <property type="entry name" value="Invertebrate-type lysozyme"/>
    <property type="match status" value="1"/>
</dbReference>
<dbReference type="Gene3D" id="1.10.530.10">
    <property type="match status" value="1"/>
</dbReference>
<dbReference type="InterPro" id="IPR008597">
    <property type="entry name" value="Invert_lysozyme"/>
</dbReference>
<dbReference type="InterPro" id="IPR023346">
    <property type="entry name" value="Lysozyme-like_dom_sf"/>
</dbReference>
<dbReference type="PANTHER" id="PTHR11195">
    <property type="entry name" value="DESTABILASE-RELATED"/>
    <property type="match status" value="1"/>
</dbReference>
<dbReference type="PANTHER" id="PTHR11195:SF13">
    <property type="entry name" value="INVERTEBRATE-TYPE LYSOZYME 2-RELATED"/>
    <property type="match status" value="1"/>
</dbReference>
<dbReference type="Pfam" id="PF05497">
    <property type="entry name" value="Destabilase"/>
    <property type="match status" value="1"/>
</dbReference>
<dbReference type="SUPFAM" id="SSF53955">
    <property type="entry name" value="Lysozyme-like"/>
    <property type="match status" value="1"/>
</dbReference>
<dbReference type="PROSITE" id="PS51909">
    <property type="entry name" value="LYSOZYME_I"/>
    <property type="match status" value="1"/>
</dbReference>
<organism evidence="14">
    <name type="scientific">Ruditapes philippinarum</name>
    <name type="common">Japanese carpet shell</name>
    <name type="synonym">Venerupis philippinarum</name>
    <dbReference type="NCBI Taxonomy" id="129788"/>
    <lineage>
        <taxon>Eukaryota</taxon>
        <taxon>Metazoa</taxon>
        <taxon>Spiralia</taxon>
        <taxon>Lophotrochozoa</taxon>
        <taxon>Mollusca</taxon>
        <taxon>Bivalvia</taxon>
        <taxon>Autobranchia</taxon>
        <taxon>Heteroconchia</taxon>
        <taxon>Euheterodonta</taxon>
        <taxon>Imparidentia</taxon>
        <taxon>Neoheterodontei</taxon>
        <taxon>Venerida</taxon>
        <taxon>Veneroidea</taxon>
        <taxon>Veneridae</taxon>
        <taxon>Ruditapes</taxon>
    </lineage>
</organism>
<protein>
    <recommendedName>
        <fullName evidence="9">Invertebrate-type lysozyme</fullName>
        <ecNumber evidence="4 5 6 7">3.2.1.17</ecNumber>
    </recommendedName>
    <alternativeName>
        <fullName evidence="9">1,4-beta-N-acetylmuramidase</fullName>
    </alternativeName>
    <alternativeName>
        <fullName evidence="8">Destabilase</fullName>
    </alternativeName>
</protein>
<feature type="signal peptide" evidence="4 7">
    <location>
        <begin position="1"/>
        <end position="11"/>
    </location>
</feature>
<feature type="chain" id="PRO_0000440096" description="Invertebrate-type lysozyme" evidence="9">
    <location>
        <begin position="12"/>
        <end position="136"/>
    </location>
</feature>
<feature type="domain" description="I-type lysozyme" evidence="3">
    <location>
        <begin position="14"/>
        <end position="130"/>
    </location>
</feature>
<feature type="active site" description="Proton donor" evidence="3 6">
    <location>
        <position position="29"/>
    </location>
</feature>
<feature type="active site" description="Nucleophile" evidence="3 6">
    <location>
        <position position="41"/>
    </location>
</feature>
<feature type="binding site" evidence="6 15">
    <location>
        <begin position="53"/>
        <end position="59"/>
    </location>
    <ligand>
        <name>substrate</name>
    </ligand>
</feature>
<feature type="binding site" evidence="6 15">
    <location>
        <position position="84"/>
    </location>
    <ligand>
        <name>substrate</name>
    </ligand>
</feature>
<feature type="binding site" evidence="6 15">
    <location>
        <position position="92"/>
    </location>
    <ligand>
        <name>substrate</name>
    </ligand>
</feature>
<feature type="binding site" evidence="6 15">
    <location>
        <begin position="105"/>
        <end position="107"/>
    </location>
    <ligand>
        <name>substrate</name>
    </ligand>
</feature>
<feature type="binding site" evidence="6 15">
    <location>
        <position position="119"/>
    </location>
    <ligand>
        <name>substrate</name>
    </ligand>
</feature>
<feature type="site" description="Cleavage" evidence="10 11 12">
    <location>
        <begin position="134"/>
        <end position="135"/>
    </location>
</feature>
<feature type="glycosylation site" description="N-linked (GlcNAc...) asparagine" evidence="2">
    <location>
        <position position="75"/>
    </location>
</feature>
<feature type="disulfide bond" evidence="3 6 15">
    <location>
        <begin position="21"/>
        <end position="98"/>
    </location>
</feature>
<feature type="disulfide bond" evidence="3 6 15">
    <location>
        <begin position="24"/>
        <end position="130"/>
    </location>
</feature>
<feature type="disulfide bond" evidence="3 6 15">
    <location>
        <begin position="26"/>
        <end position="33"/>
    </location>
</feature>
<feature type="disulfide bond" evidence="3 6 15">
    <location>
        <begin position="38"/>
        <end position="47"/>
    </location>
</feature>
<feature type="disulfide bond" evidence="3 6 15">
    <location>
        <begin position="60"/>
        <end position="80"/>
    </location>
</feature>
<feature type="disulfide bond" evidence="3 6 15">
    <location>
        <begin position="70"/>
        <end position="76"/>
    </location>
</feature>
<feature type="disulfide bond" evidence="3 6 15">
    <location>
        <begin position="94"/>
        <end position="112"/>
    </location>
</feature>
<feature type="mutagenesis site" description="Loss of chitinase catalytic activity." evidence="6">
    <original>E</original>
    <variation>A</variation>
    <location>
        <position position="29"/>
    </location>
</feature>
<feature type="mutagenesis site" description="Loss of chitinase catalytic activity." evidence="6">
    <original>D</original>
    <variation>A</variation>
    <location>
        <position position="41"/>
    </location>
</feature>
<feature type="sequence conflict" description="In Ref. 3; BAB33389." evidence="9" ref="3">
    <original>Y</original>
    <variation>S</variation>
    <location>
        <position position="88"/>
    </location>
</feature>
<feature type="strand" evidence="16">
    <location>
        <begin position="15"/>
        <end position="17"/>
    </location>
</feature>
<feature type="helix" evidence="16">
    <location>
        <begin position="19"/>
        <end position="30"/>
    </location>
</feature>
<feature type="strand" evidence="16">
    <location>
        <begin position="38"/>
        <end position="41"/>
    </location>
</feature>
<feature type="strand" evidence="16">
    <location>
        <begin position="44"/>
        <end position="47"/>
    </location>
</feature>
<feature type="turn" evidence="16">
    <location>
        <begin position="48"/>
        <end position="51"/>
    </location>
</feature>
<feature type="helix" evidence="16">
    <location>
        <begin position="54"/>
        <end position="59"/>
    </location>
</feature>
<feature type="strand" evidence="16">
    <location>
        <begin position="64"/>
        <end position="66"/>
    </location>
</feature>
<feature type="helix" evidence="16">
    <location>
        <begin position="67"/>
        <end position="71"/>
    </location>
</feature>
<feature type="helix" evidence="16">
    <location>
        <begin position="74"/>
        <end position="91"/>
    </location>
</feature>
<feature type="helix" evidence="16">
    <location>
        <begin position="98"/>
        <end position="107"/>
    </location>
</feature>
<feature type="helix" evidence="16">
    <location>
        <begin position="111"/>
        <end position="113"/>
    </location>
</feature>
<feature type="helix" evidence="16">
    <location>
        <begin position="115"/>
        <end position="117"/>
    </location>
</feature>
<feature type="helix" evidence="16">
    <location>
        <begin position="118"/>
        <end position="124"/>
    </location>
</feature>
<proteinExistence type="evidence at protein level"/>
<evidence type="ECO:0000250" key="1">
    <source>
        <dbReference type="UniProtKB" id="P83673"/>
    </source>
</evidence>
<evidence type="ECO:0000255" key="2">
    <source>
        <dbReference type="PROSITE-ProRule" id="PRU00498"/>
    </source>
</evidence>
<evidence type="ECO:0000255" key="3">
    <source>
        <dbReference type="PROSITE-ProRule" id="PRU01257"/>
    </source>
</evidence>
<evidence type="ECO:0000269" key="4">
    <source>
    </source>
</evidence>
<evidence type="ECO:0000269" key="5">
    <source>
    </source>
</evidence>
<evidence type="ECO:0000269" key="6">
    <source>
    </source>
</evidence>
<evidence type="ECO:0000269" key="7">
    <source>
    </source>
</evidence>
<evidence type="ECO:0000303" key="8">
    <source>
    </source>
</evidence>
<evidence type="ECO:0000305" key="9"/>
<evidence type="ECO:0000305" key="10">
    <source>
    </source>
</evidence>
<evidence type="ECO:0000305" key="11">
    <source>
    </source>
</evidence>
<evidence type="ECO:0000305" key="12">
    <source>
    </source>
</evidence>
<evidence type="ECO:0000312" key="13">
    <source>
        <dbReference type="EMBL" id="BAB33389.1"/>
    </source>
</evidence>
<evidence type="ECO:0000312" key="14">
    <source>
        <dbReference type="EMBL" id="BAC15553.1"/>
    </source>
</evidence>
<evidence type="ECO:0007744" key="15">
    <source>
        <dbReference type="PDB" id="2DQA"/>
    </source>
</evidence>
<evidence type="ECO:0007829" key="16">
    <source>
        <dbReference type="PDB" id="2DQA"/>
    </source>
</evidence>